<organism>
    <name type="scientific">Staphylococcus aureus (strain N315)</name>
    <dbReference type="NCBI Taxonomy" id="158879"/>
    <lineage>
        <taxon>Bacteria</taxon>
        <taxon>Bacillati</taxon>
        <taxon>Bacillota</taxon>
        <taxon>Bacilli</taxon>
        <taxon>Bacillales</taxon>
        <taxon>Staphylococcaceae</taxon>
        <taxon>Staphylococcus</taxon>
    </lineage>
</organism>
<reference key="1">
    <citation type="journal article" date="2001" name="Lancet">
        <title>Whole genome sequencing of meticillin-resistant Staphylococcus aureus.</title>
        <authorList>
            <person name="Kuroda M."/>
            <person name="Ohta T."/>
            <person name="Uchiyama I."/>
            <person name="Baba T."/>
            <person name="Yuzawa H."/>
            <person name="Kobayashi I."/>
            <person name="Cui L."/>
            <person name="Oguchi A."/>
            <person name="Aoki K."/>
            <person name="Nagai Y."/>
            <person name="Lian J.-Q."/>
            <person name="Ito T."/>
            <person name="Kanamori M."/>
            <person name="Matsumaru H."/>
            <person name="Maruyama A."/>
            <person name="Murakami H."/>
            <person name="Hosoyama A."/>
            <person name="Mizutani-Ui Y."/>
            <person name="Takahashi N.K."/>
            <person name="Sawano T."/>
            <person name="Inoue R."/>
            <person name="Kaito C."/>
            <person name="Sekimizu K."/>
            <person name="Hirakawa H."/>
            <person name="Kuhara S."/>
            <person name="Goto S."/>
            <person name="Yabuzaki J."/>
            <person name="Kanehisa M."/>
            <person name="Yamashita A."/>
            <person name="Oshima K."/>
            <person name="Furuya K."/>
            <person name="Yoshino C."/>
            <person name="Shiba T."/>
            <person name="Hattori M."/>
            <person name="Ogasawara N."/>
            <person name="Hayashi H."/>
            <person name="Hiramatsu K."/>
        </authorList>
    </citation>
    <scope>NUCLEOTIDE SEQUENCE [LARGE SCALE GENOMIC DNA]</scope>
    <source>
        <strain>N315</strain>
    </source>
</reference>
<reference key="2">
    <citation type="submission" date="2007-10" db="UniProtKB">
        <title>Shotgun proteomic analysis of total and membrane protein extracts of S. aureus strain N315.</title>
        <authorList>
            <person name="Vaezzadeh A.R."/>
            <person name="Deshusses J."/>
            <person name="Lescuyer P."/>
            <person name="Hochstrasser D.F."/>
        </authorList>
    </citation>
    <scope>IDENTIFICATION BY MASS SPECTROMETRY [LARGE SCALE ANALYSIS]</scope>
    <source>
        <strain>N315</strain>
    </source>
</reference>
<evidence type="ECO:0000250" key="1"/>
<evidence type="ECO:0000250" key="2">
    <source>
        <dbReference type="UniProtKB" id="P0AFG6"/>
    </source>
</evidence>
<evidence type="ECO:0000255" key="3">
    <source>
        <dbReference type="PROSITE-ProRule" id="PRU01066"/>
    </source>
</evidence>
<evidence type="ECO:0000255" key="4">
    <source>
        <dbReference type="PROSITE-ProRule" id="PRU01170"/>
    </source>
</evidence>
<evidence type="ECO:0000256" key="5">
    <source>
        <dbReference type="SAM" id="MobiDB-lite"/>
    </source>
</evidence>
<evidence type="ECO:0000305" key="6"/>
<name>ODO2_STAAN</name>
<protein>
    <recommendedName>
        <fullName>Dihydrolipoyllysine-residue succinyltransferase component of 2-oxoglutarate dehydrogenase complex</fullName>
        <ecNumber evidence="2">2.3.1.61</ecNumber>
    </recommendedName>
    <alternativeName>
        <fullName>2-oxoglutarate dehydrogenase complex component E2</fullName>
        <shortName>OGDC-E2</shortName>
    </alternativeName>
    <alternativeName>
        <fullName>Dihydrolipoamide succinyltransferase component of 2-oxoglutarate dehydrogenase complex</fullName>
    </alternativeName>
</protein>
<keyword id="KW-0012">Acyltransferase</keyword>
<keyword id="KW-0450">Lipoyl</keyword>
<keyword id="KW-0808">Transferase</keyword>
<keyword id="KW-0816">Tricarboxylic acid cycle</keyword>
<accession>Q7A5N4</accession>
<dbReference type="EC" id="2.3.1.61" evidence="2"/>
<dbReference type="EMBL" id="BA000018">
    <property type="protein sequence ID" value="BAB42504.1"/>
    <property type="molecule type" value="Genomic_DNA"/>
</dbReference>
<dbReference type="PIR" id="D89918">
    <property type="entry name" value="D89918"/>
</dbReference>
<dbReference type="RefSeq" id="WP_001115439.1">
    <property type="nucleotide sequence ID" value="NC_002745.2"/>
</dbReference>
<dbReference type="SMR" id="Q7A5N4"/>
<dbReference type="EnsemblBacteria" id="BAB42504">
    <property type="protein sequence ID" value="BAB42504"/>
    <property type="gene ID" value="BAB42504"/>
</dbReference>
<dbReference type="KEGG" id="sau:SA1244"/>
<dbReference type="HOGENOM" id="CLU_016733_0_0_9"/>
<dbReference type="UniPathway" id="UPA00868">
    <property type="reaction ID" value="UER00840"/>
</dbReference>
<dbReference type="GO" id="GO:0005829">
    <property type="term" value="C:cytosol"/>
    <property type="evidence" value="ECO:0007669"/>
    <property type="project" value="TreeGrafter"/>
</dbReference>
<dbReference type="GO" id="GO:0045252">
    <property type="term" value="C:oxoglutarate dehydrogenase complex"/>
    <property type="evidence" value="ECO:0007669"/>
    <property type="project" value="InterPro"/>
</dbReference>
<dbReference type="GO" id="GO:0004149">
    <property type="term" value="F:dihydrolipoyllysine-residue succinyltransferase activity"/>
    <property type="evidence" value="ECO:0007669"/>
    <property type="project" value="UniProtKB-EC"/>
</dbReference>
<dbReference type="GO" id="GO:0033512">
    <property type="term" value="P:L-lysine catabolic process to acetyl-CoA via saccharopine"/>
    <property type="evidence" value="ECO:0007669"/>
    <property type="project" value="UniProtKB-UniPathway"/>
</dbReference>
<dbReference type="GO" id="GO:0006099">
    <property type="term" value="P:tricarboxylic acid cycle"/>
    <property type="evidence" value="ECO:0007669"/>
    <property type="project" value="UniProtKB-KW"/>
</dbReference>
<dbReference type="CDD" id="cd06849">
    <property type="entry name" value="lipoyl_domain"/>
    <property type="match status" value="1"/>
</dbReference>
<dbReference type="FunFam" id="3.30.559.10:FF:000007">
    <property type="entry name" value="Dihydrolipoamide acetyltransferase component of pyruvate dehydrogenase complex"/>
    <property type="match status" value="1"/>
</dbReference>
<dbReference type="Gene3D" id="2.40.50.100">
    <property type="match status" value="1"/>
</dbReference>
<dbReference type="Gene3D" id="3.30.559.10">
    <property type="entry name" value="Chloramphenicol acetyltransferase-like domain"/>
    <property type="match status" value="1"/>
</dbReference>
<dbReference type="Gene3D" id="4.10.320.10">
    <property type="entry name" value="E3-binding domain"/>
    <property type="match status" value="1"/>
</dbReference>
<dbReference type="InterPro" id="IPR003016">
    <property type="entry name" value="2-oxoA_DH_lipoyl-BS"/>
</dbReference>
<dbReference type="InterPro" id="IPR050537">
    <property type="entry name" value="2-oxoacid_dehydrogenase"/>
</dbReference>
<dbReference type="InterPro" id="IPR001078">
    <property type="entry name" value="2-oxoacid_DH_actylTfrase"/>
</dbReference>
<dbReference type="InterPro" id="IPR000089">
    <property type="entry name" value="Biotin_lipoyl"/>
</dbReference>
<dbReference type="InterPro" id="IPR023213">
    <property type="entry name" value="CAT-like_dom_sf"/>
</dbReference>
<dbReference type="InterPro" id="IPR036625">
    <property type="entry name" value="E3-bd_dom_sf"/>
</dbReference>
<dbReference type="InterPro" id="IPR004167">
    <property type="entry name" value="PSBD"/>
</dbReference>
<dbReference type="InterPro" id="IPR011053">
    <property type="entry name" value="Single_hybrid_motif"/>
</dbReference>
<dbReference type="InterPro" id="IPR006255">
    <property type="entry name" value="SucB"/>
</dbReference>
<dbReference type="NCBIfam" id="NF004309">
    <property type="entry name" value="PRK05704.1"/>
    <property type="match status" value="1"/>
</dbReference>
<dbReference type="NCBIfam" id="TIGR01347">
    <property type="entry name" value="sucB"/>
    <property type="match status" value="1"/>
</dbReference>
<dbReference type="PANTHER" id="PTHR43416:SF5">
    <property type="entry name" value="DIHYDROLIPOYLLYSINE-RESIDUE SUCCINYLTRANSFERASE COMPONENT OF 2-OXOGLUTARATE DEHYDROGENASE COMPLEX, MITOCHONDRIAL"/>
    <property type="match status" value="1"/>
</dbReference>
<dbReference type="PANTHER" id="PTHR43416">
    <property type="entry name" value="DIHYDROLIPOYLLYSINE-RESIDUE SUCCINYLTRANSFERASE COMPONENT OF 2-OXOGLUTARATE DEHYDROGENASE COMPLEX, MITOCHONDRIAL-RELATED"/>
    <property type="match status" value="1"/>
</dbReference>
<dbReference type="Pfam" id="PF00198">
    <property type="entry name" value="2-oxoacid_dh"/>
    <property type="match status" value="1"/>
</dbReference>
<dbReference type="Pfam" id="PF00364">
    <property type="entry name" value="Biotin_lipoyl"/>
    <property type="match status" value="1"/>
</dbReference>
<dbReference type="Pfam" id="PF02817">
    <property type="entry name" value="E3_binding"/>
    <property type="match status" value="1"/>
</dbReference>
<dbReference type="SUPFAM" id="SSF52777">
    <property type="entry name" value="CoA-dependent acyltransferases"/>
    <property type="match status" value="1"/>
</dbReference>
<dbReference type="SUPFAM" id="SSF51230">
    <property type="entry name" value="Single hybrid motif"/>
    <property type="match status" value="1"/>
</dbReference>
<dbReference type="PROSITE" id="PS50968">
    <property type="entry name" value="BIOTINYL_LIPOYL"/>
    <property type="match status" value="1"/>
</dbReference>
<dbReference type="PROSITE" id="PS00189">
    <property type="entry name" value="LIPOYL"/>
    <property type="match status" value="1"/>
</dbReference>
<dbReference type="PROSITE" id="PS51826">
    <property type="entry name" value="PSBD"/>
    <property type="match status" value="1"/>
</dbReference>
<comment type="function">
    <text evidence="2">E2 component of the 2-oxoglutarate dehydrogenase (OGDH) complex which catalyzes the second step in the conversion of 2-oxoglutarate to succinyl-CoA and CO(2).</text>
</comment>
<comment type="catalytic activity">
    <reaction evidence="2">
        <text>N(6)-[(R)-dihydrolipoyl]-L-lysyl-[protein] + succinyl-CoA = N(6)-[(R)-S(8)-succinyldihydrolipoyl]-L-lysyl-[protein] + CoA</text>
        <dbReference type="Rhea" id="RHEA:15213"/>
        <dbReference type="Rhea" id="RHEA-COMP:10475"/>
        <dbReference type="Rhea" id="RHEA-COMP:20092"/>
        <dbReference type="ChEBI" id="CHEBI:57287"/>
        <dbReference type="ChEBI" id="CHEBI:57292"/>
        <dbReference type="ChEBI" id="CHEBI:83100"/>
        <dbReference type="ChEBI" id="CHEBI:83120"/>
        <dbReference type="EC" id="2.3.1.61"/>
    </reaction>
</comment>
<comment type="cofactor">
    <cofactor evidence="1">
        <name>(R)-lipoate</name>
        <dbReference type="ChEBI" id="CHEBI:83088"/>
    </cofactor>
    <text evidence="1">Binds 1 lipoyl cofactor covalently.</text>
</comment>
<comment type="pathway">
    <text>Amino-acid degradation; L-lysine degradation via saccharopine pathway; glutaryl-CoA from L-lysine: step 6/6.</text>
</comment>
<comment type="subunit">
    <text evidence="2">Forms a 24-polypeptide structural core with octahedral symmetry. Part of the 2-oxoglutarate dehydrogenase (OGDH) complex composed of E1 (2-oxoglutarate dehydrogenase), E2 (dihydrolipoamide succinyltransferase) and E3 (dihydrolipoamide dehydrogenase); the complex contains multiple copies of the three enzymatic components (E1, E2 and E3).</text>
</comment>
<comment type="similarity">
    <text evidence="6">Belongs to the 2-oxoacid dehydrogenase family.</text>
</comment>
<proteinExistence type="evidence at protein level"/>
<gene>
    <name type="primary">odhB</name>
    <name type="synonym">sucB</name>
    <name type="ordered locus">SA1244</name>
</gene>
<sequence>MPEVKVPELAESITEGTIAEWLKNVGDSVEKGEAILELETDKVNVEVVSEEAGVLSEQLASEGDTVEVGQAIAIIGEGSGNASKENSNDNTPQQNEETNNKKEETTNNSVDKAEVNQANDDNQQRINATPSARRYARENGVNLAEVSPKTNDVVRKEDIDKKQQAPASTQTTQQAPAKEEKKYNQYPTKPVIREKMSRRKKTAAKKLLEVSNNTAMLTTFNEVDMTNVMELRKRKKEQFMKDHDGTKLGFMSFFTKASVAALKKYPEVNAEIDGDDMITKQYYDIGVAVSTDDGLLVPFVRDCDKKNFAEIEAEIANLAVKAREKKLGLDDMVNGSFTITNGGIFGSMMSTPIINGNQAAILGMHSIITRPIAIDQDTIENRPMMYIALSYDHRIIDGKEAVGFLKTIKELIENPEDLLLES</sequence>
<feature type="chain" id="PRO_0000288104" description="Dihydrolipoyllysine-residue succinyltransferase component of 2-oxoglutarate dehydrogenase complex">
    <location>
        <begin position="1"/>
        <end position="422"/>
    </location>
</feature>
<feature type="domain" description="Lipoyl-binding" evidence="3">
    <location>
        <begin position="1"/>
        <end position="76"/>
    </location>
</feature>
<feature type="domain" description="Peripheral subunit-binding (PSBD)" evidence="4">
    <location>
        <begin position="127"/>
        <end position="163"/>
    </location>
</feature>
<feature type="region of interest" description="Disordered" evidence="5">
    <location>
        <begin position="77"/>
        <end position="184"/>
    </location>
</feature>
<feature type="compositionally biased region" description="Polar residues" evidence="5">
    <location>
        <begin position="80"/>
        <end position="94"/>
    </location>
</feature>
<feature type="compositionally biased region" description="Polar residues" evidence="5">
    <location>
        <begin position="116"/>
        <end position="130"/>
    </location>
</feature>
<feature type="compositionally biased region" description="Basic and acidic residues" evidence="5">
    <location>
        <begin position="152"/>
        <end position="163"/>
    </location>
</feature>
<feature type="compositionally biased region" description="Low complexity" evidence="5">
    <location>
        <begin position="164"/>
        <end position="176"/>
    </location>
</feature>
<feature type="active site" evidence="2">
    <location>
        <position position="393"/>
    </location>
</feature>
<feature type="active site" evidence="2">
    <location>
        <position position="397"/>
    </location>
</feature>
<feature type="modified residue" description="N6-lipoyllysine" evidence="3">
    <location>
        <position position="42"/>
    </location>
</feature>